<proteinExistence type="inferred from homology"/>
<dbReference type="EC" id="2.3.1.31" evidence="1"/>
<dbReference type="EMBL" id="AE004439">
    <property type="protein sequence ID" value="AAK02950.1"/>
    <property type="molecule type" value="Genomic_DNA"/>
</dbReference>
<dbReference type="SMR" id="P57884"/>
<dbReference type="STRING" id="272843.PM0866"/>
<dbReference type="ESTHER" id="pasmu-metx">
    <property type="family name" value="Homoserine_transacetylase"/>
</dbReference>
<dbReference type="EnsemblBacteria" id="AAK02950">
    <property type="protein sequence ID" value="AAK02950"/>
    <property type="gene ID" value="PM0866"/>
</dbReference>
<dbReference type="KEGG" id="pmu:PM0866"/>
<dbReference type="PATRIC" id="fig|272843.6.peg.876"/>
<dbReference type="HOGENOM" id="CLU_028760_1_2_6"/>
<dbReference type="OrthoDB" id="9800754at2"/>
<dbReference type="UniPathway" id="UPA00051">
    <property type="reaction ID" value="UER00074"/>
</dbReference>
<dbReference type="Proteomes" id="UP000000809">
    <property type="component" value="Chromosome"/>
</dbReference>
<dbReference type="GO" id="GO:0005737">
    <property type="term" value="C:cytoplasm"/>
    <property type="evidence" value="ECO:0007669"/>
    <property type="project" value="UniProtKB-SubCell"/>
</dbReference>
<dbReference type="GO" id="GO:0004414">
    <property type="term" value="F:homoserine O-acetyltransferase activity"/>
    <property type="evidence" value="ECO:0007669"/>
    <property type="project" value="UniProtKB-UniRule"/>
</dbReference>
<dbReference type="GO" id="GO:0009092">
    <property type="term" value="P:homoserine metabolic process"/>
    <property type="evidence" value="ECO:0007669"/>
    <property type="project" value="TreeGrafter"/>
</dbReference>
<dbReference type="GO" id="GO:0009086">
    <property type="term" value="P:methionine biosynthetic process"/>
    <property type="evidence" value="ECO:0007669"/>
    <property type="project" value="UniProtKB-UniRule"/>
</dbReference>
<dbReference type="FunFam" id="1.10.1740.110:FF:000001">
    <property type="entry name" value="Homoserine O-acetyltransferase"/>
    <property type="match status" value="1"/>
</dbReference>
<dbReference type="Gene3D" id="1.10.1740.110">
    <property type="match status" value="1"/>
</dbReference>
<dbReference type="Gene3D" id="3.40.50.1820">
    <property type="entry name" value="alpha/beta hydrolase"/>
    <property type="match status" value="1"/>
</dbReference>
<dbReference type="HAMAP" id="MF_00296">
    <property type="entry name" value="MetX_acyltransf"/>
    <property type="match status" value="1"/>
</dbReference>
<dbReference type="InterPro" id="IPR000073">
    <property type="entry name" value="AB_hydrolase_1"/>
</dbReference>
<dbReference type="InterPro" id="IPR029058">
    <property type="entry name" value="AB_hydrolase_fold"/>
</dbReference>
<dbReference type="InterPro" id="IPR008220">
    <property type="entry name" value="HAT_MetX-like"/>
</dbReference>
<dbReference type="NCBIfam" id="TIGR01392">
    <property type="entry name" value="homoserO_Ac_trn"/>
    <property type="match status" value="1"/>
</dbReference>
<dbReference type="NCBIfam" id="NF001209">
    <property type="entry name" value="PRK00175.1"/>
    <property type="match status" value="1"/>
</dbReference>
<dbReference type="PANTHER" id="PTHR32268">
    <property type="entry name" value="HOMOSERINE O-ACETYLTRANSFERASE"/>
    <property type="match status" value="1"/>
</dbReference>
<dbReference type="PANTHER" id="PTHR32268:SF11">
    <property type="entry name" value="HOMOSERINE O-ACETYLTRANSFERASE"/>
    <property type="match status" value="1"/>
</dbReference>
<dbReference type="Pfam" id="PF00561">
    <property type="entry name" value="Abhydrolase_1"/>
    <property type="match status" value="1"/>
</dbReference>
<dbReference type="PIRSF" id="PIRSF000443">
    <property type="entry name" value="Homoser_Ac_trans"/>
    <property type="match status" value="1"/>
</dbReference>
<dbReference type="SUPFAM" id="SSF53474">
    <property type="entry name" value="alpha/beta-Hydrolases"/>
    <property type="match status" value="1"/>
</dbReference>
<evidence type="ECO:0000255" key="1">
    <source>
        <dbReference type="HAMAP-Rule" id="MF_00296"/>
    </source>
</evidence>
<accession>P57884</accession>
<organism>
    <name type="scientific">Pasteurella multocida (strain Pm70)</name>
    <dbReference type="NCBI Taxonomy" id="272843"/>
    <lineage>
        <taxon>Bacteria</taxon>
        <taxon>Pseudomonadati</taxon>
        <taxon>Pseudomonadota</taxon>
        <taxon>Gammaproteobacteria</taxon>
        <taxon>Pasteurellales</taxon>
        <taxon>Pasteurellaceae</taxon>
        <taxon>Pasteurella</taxon>
    </lineage>
</organism>
<reference key="1">
    <citation type="journal article" date="2001" name="Proc. Natl. Acad. Sci. U.S.A.">
        <title>Complete genomic sequence of Pasteurella multocida Pm70.</title>
        <authorList>
            <person name="May B.J."/>
            <person name="Zhang Q."/>
            <person name="Li L.L."/>
            <person name="Paustian M.L."/>
            <person name="Whittam T.S."/>
            <person name="Kapur V."/>
        </authorList>
    </citation>
    <scope>NUCLEOTIDE SEQUENCE [LARGE SCALE GENOMIC DNA]</scope>
    <source>
        <strain>Pm70</strain>
    </source>
</reference>
<keyword id="KW-0012">Acyltransferase</keyword>
<keyword id="KW-0028">Amino-acid biosynthesis</keyword>
<keyword id="KW-0963">Cytoplasm</keyword>
<keyword id="KW-0486">Methionine biosynthesis</keyword>
<keyword id="KW-1185">Reference proteome</keyword>
<keyword id="KW-0808">Transferase</keyword>
<feature type="chain" id="PRO_0000155736" description="Homoserine O-acetyltransferase">
    <location>
        <begin position="1"/>
        <end position="360"/>
    </location>
</feature>
<feature type="domain" description="AB hydrolase-1" evidence="1">
    <location>
        <begin position="41"/>
        <end position="344"/>
    </location>
</feature>
<feature type="active site" description="Nucleophile" evidence="1">
    <location>
        <position position="144"/>
    </location>
</feature>
<feature type="active site" evidence="1">
    <location>
        <position position="305"/>
    </location>
</feature>
<feature type="active site" evidence="1">
    <location>
        <position position="338"/>
    </location>
</feature>
<feature type="binding site" evidence="1">
    <location>
        <position position="213"/>
    </location>
    <ligand>
        <name>substrate</name>
    </ligand>
</feature>
<feature type="binding site" evidence="1">
    <location>
        <position position="339"/>
    </location>
    <ligand>
        <name>substrate</name>
    </ligand>
</feature>
<comment type="function">
    <text evidence="1">Transfers an acetyl group from acetyl-CoA to L-homoserine, forming acetyl-L-homoserine.</text>
</comment>
<comment type="catalytic activity">
    <reaction evidence="1">
        <text>L-homoserine + acetyl-CoA = O-acetyl-L-homoserine + CoA</text>
        <dbReference type="Rhea" id="RHEA:13701"/>
        <dbReference type="ChEBI" id="CHEBI:57287"/>
        <dbReference type="ChEBI" id="CHEBI:57288"/>
        <dbReference type="ChEBI" id="CHEBI:57476"/>
        <dbReference type="ChEBI" id="CHEBI:57716"/>
        <dbReference type="EC" id="2.3.1.31"/>
    </reaction>
</comment>
<comment type="pathway">
    <text evidence="1">Amino-acid biosynthesis; L-methionine biosynthesis via de novo pathway; O-acetyl-L-homoserine from L-homoserine: step 1/1.</text>
</comment>
<comment type="subunit">
    <text evidence="1">Homodimer.</text>
</comment>
<comment type="subcellular location">
    <subcellularLocation>
        <location evidence="1">Cytoplasm</location>
    </subcellularLocation>
</comment>
<comment type="similarity">
    <text evidence="1">Belongs to the AB hydrolase superfamily. MetX family.</text>
</comment>
<protein>
    <recommendedName>
        <fullName evidence="1">Homoserine O-acetyltransferase</fullName>
        <shortName evidence="1">HAT</shortName>
        <ecNumber evidence="1">2.3.1.31</ecNumber>
    </recommendedName>
    <alternativeName>
        <fullName evidence="1">Homoserine transacetylase</fullName>
        <shortName evidence="1">HTA</shortName>
    </alternativeName>
</protein>
<name>METXA_PASMU</name>
<sequence length="360" mass="40312">MAVQKVKLFTEAPFTLSLGGTLQDIEIAYQTYGELNKEKTNAILICHALTGDAEPYFADHSQRGWWQTFMGEGLALDTSQYFFICSNVLGGCKGTTGPSSINPKTNKPYGSQFPNIIVQDIVALQRALLTHLNIPRLHAVIGGSFGGMQATQWAIDYPDDVSNVINLCSSLLFGAEAIGFNHVMRQAVINDPNFNGGDYYDSQPPEKGLAIARMLGMLTYRTDLQLTKAFGRATKAETEFWGDYFQVESYLSYQGKKFLARFDANSYLHLLRALDLYDPGFQYESLSAALARIKARYTLVAVENDQLFKLTELQKSKKLLEESGVDLVYYQFSSDYGHDAFLVDYAFFEKKIRLALANQD</sequence>
<gene>
    <name evidence="1" type="primary">metXA</name>
    <name type="synonym">met2</name>
    <name type="ordered locus">PM0866</name>
</gene>